<evidence type="ECO:0000256" key="1">
    <source>
        <dbReference type="SAM" id="MobiDB-lite"/>
    </source>
</evidence>
<evidence type="ECO:0000269" key="2">
    <source>
    </source>
</evidence>
<evidence type="ECO:0000269" key="3">
    <source>
    </source>
</evidence>
<evidence type="ECO:0000269" key="4">
    <source>
    </source>
</evidence>
<evidence type="ECO:0000269" key="5">
    <source>
    </source>
</evidence>
<evidence type="ECO:0000269" key="6">
    <source>
    </source>
</evidence>
<evidence type="ECO:0000269" key="7">
    <source>
    </source>
</evidence>
<evidence type="ECO:0000269" key="8">
    <source>
    </source>
</evidence>
<evidence type="ECO:0000305" key="9"/>
<evidence type="ECO:0000305" key="10">
    <source>
    </source>
</evidence>
<evidence type="ECO:0007829" key="11">
    <source>
        <dbReference type="PDB" id="2KNG"/>
    </source>
</evidence>
<evidence type="ECO:0007829" key="12">
    <source>
        <dbReference type="PDB" id="4E1P"/>
    </source>
</evidence>
<evidence type="ECO:0007829" key="13">
    <source>
        <dbReference type="PDB" id="6QKP"/>
    </source>
</evidence>
<keyword id="KW-0002">3D-structure</keyword>
<keyword id="KW-0963">Cytoplasm</keyword>
<keyword id="KW-0238">DNA-binding</keyword>
<keyword id="KW-1185">Reference proteome</keyword>
<keyword id="KW-0678">Repressor</keyword>
<keyword id="KW-0804">Transcription</keyword>
<keyword id="KW-0805">Transcription regulation</keyword>
<keyword id="KW-0843">Virulence</keyword>
<gene>
    <name type="primary">lsr2</name>
    <name type="ordered locus">Rv3597c</name>
    <name type="ORF">MTCY07H7B.25</name>
</gene>
<comment type="function">
    <text evidence="2 3 4 5 6 8">DNA-bridging protein that has both architectural and regulatory roles (PubMed:18187505). Influences the organization of chromatin and gene expression by binding non-specifically to DNA, with a preference for AT-rich sequences, and bridging distant DNA segments (PubMed:20133735). Binds in the minor groove of AT-rich DNA (PubMed:21673140). Represses expression of multiple genes involved in a broad range of cellular processes, including major virulence factors or antibiotic-induced genes, such as iniBAC or efpA (PubMed:17590082), and genes important for adaptation of changing O(2) levels (PubMed:24895305). May also activate expression of some gene (PubMed:24895305). May coordinate global gene regulation and virulence (PubMed:20133735). Also protects mycobacteria against reactive oxygen intermediates during macrophage infection by acting as a physical barrier to DNA degradation (PubMed:19237572); the physical protection has been questioned (PubMed:24895305). A strain overexpressing this protein consumes O(2) more slowly than wild-type (PubMed:24895305).</text>
</comment>
<comment type="subunit">
    <text evidence="3 7">Homodimer. May form higher oligomers via protease-activation.</text>
</comment>
<comment type="subcellular location">
    <subcellularLocation>
        <location evidence="3 5">Cytoplasm</location>
        <location evidence="3 5">Nucleoid</location>
    </subcellularLocation>
</comment>
<comment type="domain">
    <text evidence="3 5 7">The C-terminal domain binds DNA and the N-terminal domain is involved in dimerization. Both domains are essential for normal function.</text>
</comment>
<comment type="PTM">
    <text evidence="7">The three N-terminal residues may be cleaved by proteases in response to external stress. This cleavage may be required for oligomerization, which leads to chromosome compaction and protection.</text>
</comment>
<comment type="disruption phenotype">
    <text evidence="8">No visible effect on nucleoid structure during anaerobic growth by whole cell staining. Sensitive to atmospheric O(2) levels, at 2% O(2) no difference in growth up to 14 days; required for adaptation to anaerobiosis, at 21 days nearly 1000-fold decrease in survival under anaerobic conditions. Consumes O(2) more rapidly. Has a significant lag in recovery from 7 or 14 days anaerobic growth. Decreased virulence in lungs of BALB/c mice; no visible lung disease at any time point. Increased sensitivity to reactive nitrogen species, not more sensitive to H(2)O(2) or mitomycin (PubMed:24895305).</text>
</comment>
<comment type="similarity">
    <text evidence="9">Belongs to the Lsr2 family.</text>
</comment>
<protein>
    <recommendedName>
        <fullName>Nucleoid-associated protein Lsr2</fullName>
    </recommendedName>
</protein>
<proteinExistence type="evidence at protein level"/>
<sequence>MAKKVTVTLVDDFDGSGAADETVEFGLDGVTYEIDLSTKNATKLRGDLKQWVAAGRRVGGRRRGRSGSGRGRGAIDREQSAAIREWARRNGHNVSTRGRIPADVIDAYHAAT</sequence>
<reference key="1">
    <citation type="journal article" date="1998" name="Nature">
        <title>Deciphering the biology of Mycobacterium tuberculosis from the complete genome sequence.</title>
        <authorList>
            <person name="Cole S.T."/>
            <person name="Brosch R."/>
            <person name="Parkhill J."/>
            <person name="Garnier T."/>
            <person name="Churcher C.M."/>
            <person name="Harris D.E."/>
            <person name="Gordon S.V."/>
            <person name="Eiglmeier K."/>
            <person name="Gas S."/>
            <person name="Barry C.E. III"/>
            <person name="Tekaia F."/>
            <person name="Badcock K."/>
            <person name="Basham D."/>
            <person name="Brown D."/>
            <person name="Chillingworth T."/>
            <person name="Connor R."/>
            <person name="Davies R.M."/>
            <person name="Devlin K."/>
            <person name="Feltwell T."/>
            <person name="Gentles S."/>
            <person name="Hamlin N."/>
            <person name="Holroyd S."/>
            <person name="Hornsby T."/>
            <person name="Jagels K."/>
            <person name="Krogh A."/>
            <person name="McLean J."/>
            <person name="Moule S."/>
            <person name="Murphy L.D."/>
            <person name="Oliver S."/>
            <person name="Osborne J."/>
            <person name="Quail M.A."/>
            <person name="Rajandream M.A."/>
            <person name="Rogers J."/>
            <person name="Rutter S."/>
            <person name="Seeger K."/>
            <person name="Skelton S."/>
            <person name="Squares S."/>
            <person name="Squares R."/>
            <person name="Sulston J.E."/>
            <person name="Taylor K."/>
            <person name="Whitehead S."/>
            <person name="Barrell B.G."/>
        </authorList>
    </citation>
    <scope>NUCLEOTIDE SEQUENCE [LARGE SCALE GENOMIC DNA]</scope>
    <source>
        <strain>ATCC 25618 / H37Rv</strain>
    </source>
</reference>
<reference key="2">
    <citation type="journal article" date="2007" name="PLoS Pathog.">
        <title>Transcriptional regulation of multi-drug tolerance and antibiotic-induced responses by the histone-like protein Lsr2 in M. tuberculosis.</title>
        <authorList>
            <person name="Colangeli R."/>
            <person name="Helb D."/>
            <person name="Vilcheze C."/>
            <person name="Hazbon M.H."/>
            <person name="Lee C.G."/>
            <person name="Safi H."/>
            <person name="Sayers B."/>
            <person name="Sardone I."/>
            <person name="Jones M.B."/>
            <person name="Fleischmann R.D."/>
            <person name="Peterson S.N."/>
            <person name="Jacobs W.R. Jr."/>
            <person name="Alland D."/>
        </authorList>
    </citation>
    <scope>FUNCTION</scope>
    <scope>DNA-BINDING</scope>
    <source>
        <strain>ATCC 25618 / H37Rv</strain>
    </source>
</reference>
<reference key="3">
    <citation type="journal article" date="2008" name="Nucleic Acids Res.">
        <title>Lsr2 of Mycobacterium tuberculosis is a DNA-bridging protein.</title>
        <authorList>
            <person name="Chen J.M."/>
            <person name="Ren H."/>
            <person name="Shaw J.E."/>
            <person name="Wang Y.J."/>
            <person name="Li M."/>
            <person name="Leung A.S."/>
            <person name="Tran V."/>
            <person name="Berbenetz N.M."/>
            <person name="Kocincova D."/>
            <person name="Yip C.M."/>
            <person name="Reyrat J.M."/>
            <person name="Liu J."/>
        </authorList>
    </citation>
    <scope>FUNCTION</scope>
    <scope>DNA-BINDING</scope>
    <scope>SUBUNIT</scope>
    <scope>SUBCELLULAR LOCATION</scope>
    <scope>DOMAIN</scope>
    <scope>MUTAGENESIS OF ASP-28; ARG-45; ARG-84 AND PRO-101</scope>
</reference>
<reference key="4">
    <citation type="journal article" date="2009" name="Proc. Natl. Acad. Sci. U.S.A.">
        <title>The multifunctional histone-like protein Lsr2 protects mycobacteria against reactive oxygen intermediates.</title>
        <authorList>
            <person name="Colangeli R."/>
            <person name="Haq A."/>
            <person name="Arcus V.L."/>
            <person name="Summers E."/>
            <person name="Magliozzo R.S."/>
            <person name="McBride A."/>
            <person name="Mitra A.K."/>
            <person name="Radjainia M."/>
            <person name="Khajo A."/>
            <person name="Jacobs W.R. Jr."/>
            <person name="Salgame P."/>
            <person name="Alland D."/>
        </authorList>
    </citation>
    <scope>FUNCTION IN PROTECTION AGAINST REACTIVE OXYGEN INTERMEDIATES</scope>
</reference>
<reference key="5">
    <citation type="journal article" date="2011" name="Mol. Cell. Proteomics">
        <title>Proteogenomic analysis of Mycobacterium tuberculosis by high resolution mass spectrometry.</title>
        <authorList>
            <person name="Kelkar D.S."/>
            <person name="Kumar D."/>
            <person name="Kumar P."/>
            <person name="Balakrishnan L."/>
            <person name="Muthusamy B."/>
            <person name="Yadav A.K."/>
            <person name="Shrivastava P."/>
            <person name="Marimuthu A."/>
            <person name="Anand S."/>
            <person name="Sundaram H."/>
            <person name="Kingsbury R."/>
            <person name="Harsha H.C."/>
            <person name="Nair B."/>
            <person name="Prasad T.S."/>
            <person name="Chauhan D.S."/>
            <person name="Katoch K."/>
            <person name="Katoch V.M."/>
            <person name="Kumar P."/>
            <person name="Chaerkady R."/>
            <person name="Ramachandran S."/>
            <person name="Dash D."/>
            <person name="Pandey A."/>
        </authorList>
    </citation>
    <scope>IDENTIFICATION BY MASS SPECTROMETRY [LARGE SCALE ANALYSIS]</scope>
    <source>
        <strain>ATCC 25618 / H37Rv</strain>
    </source>
</reference>
<reference key="6">
    <citation type="journal article" date="2011" name="Proc. Natl. Acad. Sci. U.S.A.">
        <title>Structural basis for recognition of AT-rich DNA by unrelated xenogeneic silencing proteins.</title>
        <authorList>
            <person name="Gordon B.R."/>
            <person name="Li Y."/>
            <person name="Cote A."/>
            <person name="Weirauch M.T."/>
            <person name="Ding P."/>
            <person name="Hughes T.R."/>
            <person name="Navarre W.W."/>
            <person name="Xia B."/>
            <person name="Liu J."/>
        </authorList>
    </citation>
    <scope>FUNCTION</scope>
    <scope>DNA-BINDING</scope>
    <scope>MUTAGENESIS OF 97-ARG--ARG-99; ARG-97 AND ARG-99</scope>
</reference>
<reference key="7">
    <citation type="journal article" date="2014" name="MBio">
        <title>Mycobacterium tuberculosis Lsr2 is a global transcriptional regulator required for adaptation to changing oxygen levels and virulence.</title>
        <authorList>
            <person name="Bartek I.L."/>
            <person name="Woolhiser L.K."/>
            <person name="Baughn A.D."/>
            <person name="Basaraba R.J."/>
            <person name="Jacobs W.R. Jr."/>
            <person name="Lenaerts A.J."/>
            <person name="Voskuil M.I."/>
        </authorList>
    </citation>
    <scope>FUNCTION</scope>
    <scope>REGULON</scope>
    <scope>DISRUPTION PHENOTYPE</scope>
    <scope>VIRULENCE</scope>
    <source>
        <strain>ATCC 25618 / H37Rv</strain>
    </source>
</reference>
<reference key="8">
    <citation type="journal article" date="2010" name="Proc. Natl. Acad. Sci. U.S.A.">
        <title>Lsr2 is a nucleoid-associated protein that targets AT-rich sequences and virulence genes in Mycobacterium tuberculosis.</title>
        <authorList>
            <person name="Gordon B.R."/>
            <person name="Li Y."/>
            <person name="Wang L."/>
            <person name="Sintsova A."/>
            <person name="van Bakel H."/>
            <person name="Tian S."/>
            <person name="Navarre W.W."/>
            <person name="Xia B."/>
            <person name="Liu J."/>
        </authorList>
    </citation>
    <scope>STRUCTURE BY NMR OF 66-112</scope>
    <scope>FUNCTION</scope>
    <scope>SUBCELLULAR LOCATION</scope>
    <scope>DOMAIN</scope>
    <source>
        <strain>ATCC 25618 / H37Rv</strain>
    </source>
</reference>
<reference key="9">
    <citation type="journal article" date="2012" name="PLoS ONE">
        <title>The structure of the oligomerization domain of Lsr2 from Mycobacterium tuberculosis reveals a mechanism for chromosome organization and protection.</title>
        <authorList>
            <person name="Summers E.L."/>
            <person name="Meindl K."/>
            <person name="Uson I."/>
            <person name="Mitra A.K."/>
            <person name="Radjainia M."/>
            <person name="Colangeli R."/>
            <person name="Alland D."/>
            <person name="Arcus V.L."/>
        </authorList>
    </citation>
    <scope>X-RAY CRYSTALLOGRAPHY (1.73 ANGSTROMS) OF 1-61</scope>
    <scope>SUBUNIT</scope>
    <scope>DOMAIN</scope>
    <scope>POST-TRANSLATIONAL MODIFICATION</scope>
    <source>
        <strain>ATCC 25618 / H37Rv</strain>
    </source>
</reference>
<organism>
    <name type="scientific">Mycobacterium tuberculosis (strain ATCC 25618 / H37Rv)</name>
    <dbReference type="NCBI Taxonomy" id="83332"/>
    <lineage>
        <taxon>Bacteria</taxon>
        <taxon>Bacillati</taxon>
        <taxon>Actinomycetota</taxon>
        <taxon>Actinomycetes</taxon>
        <taxon>Mycobacteriales</taxon>
        <taxon>Mycobacteriaceae</taxon>
        <taxon>Mycobacterium</taxon>
        <taxon>Mycobacterium tuberculosis complex</taxon>
    </lineage>
</organism>
<name>LSR2_MYCTU</name>
<dbReference type="EMBL" id="AL123456">
    <property type="protein sequence ID" value="CCP46420.1"/>
    <property type="molecule type" value="Genomic_DNA"/>
</dbReference>
<dbReference type="PIR" id="F70954">
    <property type="entry name" value="F70954"/>
</dbReference>
<dbReference type="RefSeq" id="NP_218114.1">
    <property type="nucleotide sequence ID" value="NC_000962.3"/>
</dbReference>
<dbReference type="RefSeq" id="WP_003419513.1">
    <property type="nucleotide sequence ID" value="NZ_NVQJ01000056.1"/>
</dbReference>
<dbReference type="PDB" id="2KNG">
    <property type="method" value="NMR"/>
    <property type="chains" value="A=66-112"/>
</dbReference>
<dbReference type="PDB" id="4E1P">
    <property type="method" value="X-ray"/>
    <property type="resolution" value="1.73 A"/>
    <property type="chains" value="A/B=1-61"/>
</dbReference>
<dbReference type="PDB" id="4E1R">
    <property type="method" value="X-ray"/>
    <property type="resolution" value="2.04 A"/>
    <property type="chains" value="A/B=1-61"/>
</dbReference>
<dbReference type="PDB" id="6QKP">
    <property type="method" value="NMR"/>
    <property type="chains" value="A=74-112"/>
</dbReference>
<dbReference type="PDB" id="6QKQ">
    <property type="method" value="NMR"/>
    <property type="chains" value="A=74-111"/>
</dbReference>
<dbReference type="PDBsum" id="2KNG"/>
<dbReference type="PDBsum" id="4E1P"/>
<dbReference type="PDBsum" id="4E1R"/>
<dbReference type="PDBsum" id="6QKP"/>
<dbReference type="PDBsum" id="6QKQ"/>
<dbReference type="BMRB" id="P9WIP7"/>
<dbReference type="SMR" id="P9WIP7"/>
<dbReference type="STRING" id="83332.Rv3597c"/>
<dbReference type="DrugBank" id="DB05154">
    <property type="generic name" value="Pretomanid"/>
</dbReference>
<dbReference type="iPTMnet" id="P9WIP7"/>
<dbReference type="PaxDb" id="83332-Rv3597c"/>
<dbReference type="DNASU" id="885580"/>
<dbReference type="GeneID" id="45427584"/>
<dbReference type="GeneID" id="885580"/>
<dbReference type="KEGG" id="mtu:Rv3597c"/>
<dbReference type="KEGG" id="mtv:RVBD_3597c"/>
<dbReference type="TubercuList" id="Rv3597c"/>
<dbReference type="eggNOG" id="ENOG5032RKK">
    <property type="taxonomic scope" value="Bacteria"/>
</dbReference>
<dbReference type="InParanoid" id="P9WIP7"/>
<dbReference type="OrthoDB" id="4113332at2"/>
<dbReference type="PhylomeDB" id="P9WIP7"/>
<dbReference type="EvolutionaryTrace" id="P9WIP7"/>
<dbReference type="PHI-base" id="PHI:3077"/>
<dbReference type="PHI-base" id="PHI:3632"/>
<dbReference type="Proteomes" id="UP000001584">
    <property type="component" value="Chromosome"/>
</dbReference>
<dbReference type="GO" id="GO:0005829">
    <property type="term" value="C:cytosol"/>
    <property type="evidence" value="ECO:0007005"/>
    <property type="project" value="MTBBASE"/>
</dbReference>
<dbReference type="GO" id="GO:0009295">
    <property type="term" value="C:nucleoid"/>
    <property type="evidence" value="ECO:0007669"/>
    <property type="project" value="UniProtKB-SubCell"/>
</dbReference>
<dbReference type="GO" id="GO:0009274">
    <property type="term" value="C:peptidoglycan-based cell wall"/>
    <property type="evidence" value="ECO:0007005"/>
    <property type="project" value="MTBBASE"/>
</dbReference>
<dbReference type="GO" id="GO:0005886">
    <property type="term" value="C:plasma membrane"/>
    <property type="evidence" value="ECO:0007005"/>
    <property type="project" value="MTBBASE"/>
</dbReference>
<dbReference type="GO" id="GO:0016746">
    <property type="term" value="F:acyltransferase activity"/>
    <property type="evidence" value="ECO:0007669"/>
    <property type="project" value="InterPro"/>
</dbReference>
<dbReference type="GO" id="GO:0003677">
    <property type="term" value="F:DNA binding"/>
    <property type="evidence" value="ECO:0000314"/>
    <property type="project" value="MTBBASE"/>
</dbReference>
<dbReference type="GO" id="GO:0071453">
    <property type="term" value="P:cellular response to oxygen levels"/>
    <property type="evidence" value="ECO:0000315"/>
    <property type="project" value="UniProtKB"/>
</dbReference>
<dbReference type="GO" id="GO:0042262">
    <property type="term" value="P:DNA protection"/>
    <property type="evidence" value="ECO:0000314"/>
    <property type="project" value="MTBBASE"/>
</dbReference>
<dbReference type="GO" id="GO:0006355">
    <property type="term" value="P:regulation of DNA-templated transcription"/>
    <property type="evidence" value="ECO:0000315"/>
    <property type="project" value="MTBBASE"/>
</dbReference>
<dbReference type="GO" id="GO:0042542">
    <property type="term" value="P:response to hydrogen peroxide"/>
    <property type="evidence" value="ECO:0000314"/>
    <property type="project" value="MTBBASE"/>
</dbReference>
<dbReference type="GO" id="GO:0010039">
    <property type="term" value="P:response to iron ion"/>
    <property type="evidence" value="ECO:0000270"/>
    <property type="project" value="MTBBASE"/>
</dbReference>
<dbReference type="FunFam" id="3.30.60.230:FF:000001">
    <property type="entry name" value="Nucleoid-associated protein Lsr2"/>
    <property type="match status" value="1"/>
</dbReference>
<dbReference type="FunFam" id="4.10.320.10:FF:000004">
    <property type="entry name" value="Nucleoid-associated protein Lsr2"/>
    <property type="match status" value="1"/>
</dbReference>
<dbReference type="Gene3D" id="4.10.320.10">
    <property type="entry name" value="E3-binding domain"/>
    <property type="match status" value="1"/>
</dbReference>
<dbReference type="Gene3D" id="3.30.60.230">
    <property type="entry name" value="Lsr2, dimerization domain"/>
    <property type="match status" value="1"/>
</dbReference>
<dbReference type="InterPro" id="IPR036625">
    <property type="entry name" value="E3-bd_dom_sf"/>
</dbReference>
<dbReference type="InterPro" id="IPR042261">
    <property type="entry name" value="Lsr2-like_dimerization"/>
</dbReference>
<dbReference type="InterPro" id="IPR024412">
    <property type="entry name" value="Lsr2_dim_dom"/>
</dbReference>
<dbReference type="InterPro" id="IPR055370">
    <property type="entry name" value="Lsr2_DNA-bd"/>
</dbReference>
<dbReference type="Pfam" id="PF11774">
    <property type="entry name" value="Lsr2"/>
    <property type="match status" value="1"/>
</dbReference>
<dbReference type="Pfam" id="PF23359">
    <property type="entry name" value="Lsr2_DNA-bd"/>
    <property type="match status" value="1"/>
</dbReference>
<feature type="chain" id="PRO_0000021625" description="Nucleoid-associated protein Lsr2">
    <location>
        <begin position="1"/>
        <end position="112"/>
    </location>
</feature>
<feature type="DNA-binding region" evidence="10">
    <location>
        <begin position="97"/>
        <end position="102"/>
    </location>
</feature>
<feature type="region of interest" description="Disordered" evidence="1">
    <location>
        <begin position="57"/>
        <end position="79"/>
    </location>
</feature>
<feature type="mutagenesis site" description="Loss of activity." evidence="3">
    <original>D</original>
    <variation>A</variation>
    <location>
        <position position="28"/>
    </location>
</feature>
<feature type="mutagenesis site" description="Loss of activity." evidence="3">
    <original>R</original>
    <variation>A</variation>
    <location>
        <position position="45"/>
    </location>
</feature>
<feature type="mutagenesis site" description="Loss of activity. Can form dimers but does not bind DNA." evidence="3">
    <original>R</original>
    <variation>A</variation>
    <location>
        <position position="84"/>
    </location>
</feature>
<feature type="mutagenesis site" description="Loss of DNA-binding, in fragment 66-112." evidence="6">
    <original>RGR</original>
    <variation>AGA</variation>
    <location>
        <begin position="97"/>
        <end position="99"/>
    </location>
</feature>
<feature type="mutagenesis site" description="Reduced DNA-binding, in fragment 66-112." evidence="6">
    <original>R</original>
    <variation>A</variation>
    <location>
        <position position="97"/>
    </location>
</feature>
<feature type="mutagenesis site" description="Reduced DNA-binding, in fragment 66-112." evidence="6">
    <original>R</original>
    <variation>A</variation>
    <location>
        <position position="99"/>
    </location>
</feature>
<feature type="mutagenesis site" description="No change in activity. Can still bind DNA and form dimers." evidence="3">
    <original>P</original>
    <variation>A</variation>
    <location>
        <position position="101"/>
    </location>
</feature>
<feature type="turn" evidence="12">
    <location>
        <begin position="12"/>
        <end position="14"/>
    </location>
</feature>
<feature type="strand" evidence="12">
    <location>
        <begin position="15"/>
        <end position="18"/>
    </location>
</feature>
<feature type="strand" evidence="12">
    <location>
        <begin position="21"/>
        <end position="27"/>
    </location>
</feature>
<feature type="strand" evidence="12">
    <location>
        <begin position="30"/>
        <end position="36"/>
    </location>
</feature>
<feature type="helix" evidence="12">
    <location>
        <begin position="38"/>
        <end position="54"/>
    </location>
</feature>
<feature type="strand" evidence="12">
    <location>
        <begin position="55"/>
        <end position="57"/>
    </location>
</feature>
<feature type="helix" evidence="11">
    <location>
        <begin position="70"/>
        <end position="72"/>
    </location>
</feature>
<feature type="strand" evidence="13">
    <location>
        <begin position="74"/>
        <end position="77"/>
    </location>
</feature>
<feature type="helix" evidence="11">
    <location>
        <begin position="79"/>
        <end position="89"/>
    </location>
</feature>
<feature type="strand" evidence="11">
    <location>
        <begin position="96"/>
        <end position="98"/>
    </location>
</feature>
<feature type="helix" evidence="11">
    <location>
        <begin position="102"/>
        <end position="112"/>
    </location>
</feature>
<accession>P9WIP7</accession>
<accession>L0TG69</accession>
<accession>O06285</accession>
<accession>P65648</accession>